<protein>
    <recommendedName>
        <fullName evidence="2">Transaldolase</fullName>
        <ecNumber evidence="2">2.2.1.2</ecNumber>
    </recommendedName>
</protein>
<feature type="chain" id="PRO_1000014513" description="Transaldolase">
    <location>
        <begin position="1"/>
        <end position="308"/>
    </location>
</feature>
<feature type="active site" description="Schiff-base intermediate with substrate" evidence="2">
    <location>
        <position position="125"/>
    </location>
</feature>
<dbReference type="EC" id="2.2.1.2" evidence="2"/>
<dbReference type="EMBL" id="CT573326">
    <property type="protein sequence ID" value="CAK16415.1"/>
    <property type="molecule type" value="Genomic_DNA"/>
</dbReference>
<dbReference type="RefSeq" id="WP_011534792.1">
    <property type="nucleotide sequence ID" value="NC_008027.1"/>
</dbReference>
<dbReference type="SMR" id="Q1I7G7"/>
<dbReference type="STRING" id="384676.PSEEN3692"/>
<dbReference type="GeneID" id="32806740"/>
<dbReference type="KEGG" id="pen:PSEEN3692"/>
<dbReference type="eggNOG" id="COG0176">
    <property type="taxonomic scope" value="Bacteria"/>
</dbReference>
<dbReference type="HOGENOM" id="CLU_047470_0_1_6"/>
<dbReference type="OrthoDB" id="9809101at2"/>
<dbReference type="UniPathway" id="UPA00115">
    <property type="reaction ID" value="UER00414"/>
</dbReference>
<dbReference type="Proteomes" id="UP000000658">
    <property type="component" value="Chromosome"/>
</dbReference>
<dbReference type="GO" id="GO:0005829">
    <property type="term" value="C:cytosol"/>
    <property type="evidence" value="ECO:0007669"/>
    <property type="project" value="TreeGrafter"/>
</dbReference>
<dbReference type="GO" id="GO:0004801">
    <property type="term" value="F:transaldolase activity"/>
    <property type="evidence" value="ECO:0000250"/>
    <property type="project" value="UniProtKB"/>
</dbReference>
<dbReference type="GO" id="GO:0005975">
    <property type="term" value="P:carbohydrate metabolic process"/>
    <property type="evidence" value="ECO:0007669"/>
    <property type="project" value="InterPro"/>
</dbReference>
<dbReference type="GO" id="GO:0006098">
    <property type="term" value="P:pentose-phosphate shunt"/>
    <property type="evidence" value="ECO:0007669"/>
    <property type="project" value="UniProtKB-UniRule"/>
</dbReference>
<dbReference type="CDD" id="cd00957">
    <property type="entry name" value="Transaldolase_TalAB"/>
    <property type="match status" value="1"/>
</dbReference>
<dbReference type="FunFam" id="3.20.20.70:FF:000002">
    <property type="entry name" value="Transaldolase"/>
    <property type="match status" value="1"/>
</dbReference>
<dbReference type="Gene3D" id="3.20.20.70">
    <property type="entry name" value="Aldolase class I"/>
    <property type="match status" value="1"/>
</dbReference>
<dbReference type="HAMAP" id="MF_00492">
    <property type="entry name" value="Transaldolase_1"/>
    <property type="match status" value="1"/>
</dbReference>
<dbReference type="InterPro" id="IPR013785">
    <property type="entry name" value="Aldolase_TIM"/>
</dbReference>
<dbReference type="InterPro" id="IPR001585">
    <property type="entry name" value="TAL/FSA"/>
</dbReference>
<dbReference type="InterPro" id="IPR004730">
    <property type="entry name" value="Transaldolase_1"/>
</dbReference>
<dbReference type="InterPro" id="IPR018225">
    <property type="entry name" value="Transaldolase_AS"/>
</dbReference>
<dbReference type="NCBIfam" id="NF009001">
    <property type="entry name" value="PRK12346.1"/>
    <property type="match status" value="1"/>
</dbReference>
<dbReference type="NCBIfam" id="TIGR00874">
    <property type="entry name" value="talAB"/>
    <property type="match status" value="1"/>
</dbReference>
<dbReference type="PANTHER" id="PTHR10683">
    <property type="entry name" value="TRANSALDOLASE"/>
    <property type="match status" value="1"/>
</dbReference>
<dbReference type="PANTHER" id="PTHR10683:SF18">
    <property type="entry name" value="TRANSALDOLASE"/>
    <property type="match status" value="1"/>
</dbReference>
<dbReference type="Pfam" id="PF00923">
    <property type="entry name" value="TAL_FSA"/>
    <property type="match status" value="1"/>
</dbReference>
<dbReference type="SUPFAM" id="SSF51569">
    <property type="entry name" value="Aldolase"/>
    <property type="match status" value="1"/>
</dbReference>
<dbReference type="PROSITE" id="PS01054">
    <property type="entry name" value="TRANSALDOLASE_1"/>
    <property type="match status" value="1"/>
</dbReference>
<dbReference type="PROSITE" id="PS00958">
    <property type="entry name" value="TRANSALDOLASE_2"/>
    <property type="match status" value="1"/>
</dbReference>
<accession>Q1I7G7</accession>
<reference key="1">
    <citation type="journal article" date="2006" name="Nat. Biotechnol.">
        <title>Complete genome sequence of the entomopathogenic and metabolically versatile soil bacterium Pseudomonas entomophila.</title>
        <authorList>
            <person name="Vodovar N."/>
            <person name="Vallenet D."/>
            <person name="Cruveiller S."/>
            <person name="Rouy Z."/>
            <person name="Barbe V."/>
            <person name="Acosta C."/>
            <person name="Cattolico L."/>
            <person name="Jubin C."/>
            <person name="Lajus A."/>
            <person name="Segurens B."/>
            <person name="Vacherie B."/>
            <person name="Wincker P."/>
            <person name="Weissenbach J."/>
            <person name="Lemaitre B."/>
            <person name="Medigue C."/>
            <person name="Boccard F."/>
        </authorList>
    </citation>
    <scope>NUCLEOTIDE SEQUENCE [LARGE SCALE GENOMIC DNA]</scope>
    <source>
        <strain>L48</strain>
    </source>
</reference>
<sequence>MTSKLEQLKQFTTVVADTGDLDAITRLKPVDATTNPSLLLKAAAIPGYADLLEQVKADTKGNVDLACDKFAVSVGAGILKVIPGRISTEVDARLSFDEPALLKKAHQLIELYEAAGIKRDRVLIKLASTWEGIRAAEKLEKEGIQTNLTLLFSFAQAQACADAGVFLISPFVGRIYDWYKKSTGKEYIGAEDPGVQSVTRIYDYYKANGYNTVVMGASFRNIGQIEQLAGCDRLTISPELLVQLSDDQGELPRILKPGNAGEAKQQLNESQFRWAMNEDAMATEKLAEGIRQFARDQEKLEALMADKA</sequence>
<evidence type="ECO:0000250" key="1"/>
<evidence type="ECO:0000255" key="2">
    <source>
        <dbReference type="HAMAP-Rule" id="MF_00492"/>
    </source>
</evidence>
<keyword id="KW-0963">Cytoplasm</keyword>
<keyword id="KW-0570">Pentose shunt</keyword>
<keyword id="KW-0704">Schiff base</keyword>
<keyword id="KW-0808">Transferase</keyword>
<comment type="function">
    <text evidence="2">Transaldolase is important for the balance of metabolites in the pentose-phosphate pathway.</text>
</comment>
<comment type="catalytic activity">
    <reaction evidence="2">
        <text>D-sedoheptulose 7-phosphate + D-glyceraldehyde 3-phosphate = D-erythrose 4-phosphate + beta-D-fructose 6-phosphate</text>
        <dbReference type="Rhea" id="RHEA:17053"/>
        <dbReference type="ChEBI" id="CHEBI:16897"/>
        <dbReference type="ChEBI" id="CHEBI:57483"/>
        <dbReference type="ChEBI" id="CHEBI:57634"/>
        <dbReference type="ChEBI" id="CHEBI:59776"/>
        <dbReference type="EC" id="2.2.1.2"/>
    </reaction>
</comment>
<comment type="pathway">
    <text evidence="2">Carbohydrate degradation; pentose phosphate pathway; D-glyceraldehyde 3-phosphate and beta-D-fructose 6-phosphate from D-ribose 5-phosphate and D-xylulose 5-phosphate (non-oxidative stage): step 2/3.</text>
</comment>
<comment type="subunit">
    <text evidence="1">Homodimer.</text>
</comment>
<comment type="subcellular location">
    <subcellularLocation>
        <location evidence="2">Cytoplasm</location>
    </subcellularLocation>
</comment>
<comment type="similarity">
    <text evidence="2">Belongs to the transaldolase family. Type 1 subfamily.</text>
</comment>
<organism>
    <name type="scientific">Pseudomonas entomophila (strain L48)</name>
    <dbReference type="NCBI Taxonomy" id="384676"/>
    <lineage>
        <taxon>Bacteria</taxon>
        <taxon>Pseudomonadati</taxon>
        <taxon>Pseudomonadota</taxon>
        <taxon>Gammaproteobacteria</taxon>
        <taxon>Pseudomonadales</taxon>
        <taxon>Pseudomonadaceae</taxon>
        <taxon>Pseudomonas</taxon>
    </lineage>
</organism>
<proteinExistence type="inferred from homology"/>
<name>TAL_PSEE4</name>
<gene>
    <name evidence="2" type="primary">tal</name>
    <name type="ordered locus">PSEEN3692</name>
</gene>